<feature type="chain" id="PRO_0000228215" description="Translation initiation factor IF-2">
    <location>
        <begin position="1"/>
        <end position="620"/>
    </location>
</feature>
<feature type="domain" description="tr-type G">
    <location>
        <begin position="119"/>
        <end position="288"/>
    </location>
</feature>
<feature type="region of interest" description="G1" evidence="1">
    <location>
        <begin position="128"/>
        <end position="135"/>
    </location>
</feature>
<feature type="region of interest" description="G2" evidence="1">
    <location>
        <begin position="153"/>
        <end position="157"/>
    </location>
</feature>
<feature type="region of interest" description="G3" evidence="1">
    <location>
        <begin position="175"/>
        <end position="178"/>
    </location>
</feature>
<feature type="region of interest" description="G4" evidence="1">
    <location>
        <begin position="229"/>
        <end position="232"/>
    </location>
</feature>
<feature type="region of interest" description="G5" evidence="1">
    <location>
        <begin position="265"/>
        <end position="267"/>
    </location>
</feature>
<feature type="binding site" evidence="2">
    <location>
        <begin position="128"/>
        <end position="135"/>
    </location>
    <ligand>
        <name>GTP</name>
        <dbReference type="ChEBI" id="CHEBI:37565"/>
    </ligand>
</feature>
<feature type="binding site" evidence="2">
    <location>
        <begin position="175"/>
        <end position="179"/>
    </location>
    <ligand>
        <name>GTP</name>
        <dbReference type="ChEBI" id="CHEBI:37565"/>
    </ligand>
</feature>
<feature type="binding site" evidence="2">
    <location>
        <begin position="229"/>
        <end position="232"/>
    </location>
    <ligand>
        <name>GTP</name>
        <dbReference type="ChEBI" id="CHEBI:37565"/>
    </ligand>
</feature>
<sequence length="620" mass="68802">MKKQVKNIKKQKAQNQTKNIKKQLKEEVNTGLIDGIFVYTEPLSVIEFATKINKPLTAILKHYFNQGLLLNQNTLLTEEQMGELCLEFGFDFKKETTVTKENILQTLLETVDDEKHLKERPPIVTIMGHVDHGKTTLLDSIKNSNVVASEAGGITQAIGAYQITTNHNKKITFIDTPGHEAFTEMRSRGANVTDIVVLIVAADDGVMPQTEEAIDHAKLANVPIIVFINKIDKPEADPNRVKTELMKYGLVAEEFGGDIPFIEGSAIKKINLDKLQDTIILISELENLKANPDKFASGVVLEAHLDKAKGPVASVLVQQGTLEIKDIMIAGTTFGSIKHIEDEFKHKVLKAEPSKPVVVYGLNQVPKAGDKFVVINDEKMAREISEAQLKKQQEEERRTKQAFTLDAIKQHIDEGELKNITLIIKADTQGSVEALKNSLSKINISGVKINIIRASVGAISLSDISLASTVRDGLVIVYGFNVRPDAIVRKKAEEDHIEIKLHNIIYKVIEELEDAAKGILDPEVKELVLGQAQVRALFRHSAIGTIGGFYVLDGIIPRNAKIRVIRNGVVVYDGEINSLQHQKQDAKEIKAGFEGGLTIKNFNDIKEEDIFEAYKIEQIK</sequence>
<protein>
    <recommendedName>
        <fullName evidence="2">Translation initiation factor IF-2</fullName>
    </recommendedName>
</protein>
<proteinExistence type="inferred from homology"/>
<organism>
    <name type="scientific">Mycoplasma mycoides subsp. mycoides SC (strain CCUG 32753 / NCTC 10114 / PG1)</name>
    <dbReference type="NCBI Taxonomy" id="272632"/>
    <lineage>
        <taxon>Bacteria</taxon>
        <taxon>Bacillati</taxon>
        <taxon>Mycoplasmatota</taxon>
        <taxon>Mollicutes</taxon>
        <taxon>Mycoplasmataceae</taxon>
        <taxon>Mycoplasma</taxon>
    </lineage>
</organism>
<keyword id="KW-0963">Cytoplasm</keyword>
<keyword id="KW-0342">GTP-binding</keyword>
<keyword id="KW-0396">Initiation factor</keyword>
<keyword id="KW-0547">Nucleotide-binding</keyword>
<keyword id="KW-0648">Protein biosynthesis</keyword>
<keyword id="KW-1185">Reference proteome</keyword>
<reference key="1">
    <citation type="journal article" date="2004" name="Genome Res.">
        <title>The genome sequence of Mycoplasma mycoides subsp. mycoides SC type strain PG1T, the causative agent of contagious bovine pleuropneumonia (CBPP).</title>
        <authorList>
            <person name="Westberg J."/>
            <person name="Persson A."/>
            <person name="Holmberg A."/>
            <person name="Goesmann A."/>
            <person name="Lundeberg J."/>
            <person name="Johansson K.-E."/>
            <person name="Pettersson B."/>
            <person name="Uhlen M."/>
        </authorList>
    </citation>
    <scope>NUCLEOTIDE SEQUENCE [LARGE SCALE GENOMIC DNA]</scope>
    <source>
        <strain>CCUG 32753 / NCTC 10114 / PG1</strain>
    </source>
</reference>
<name>IF2_MYCMS</name>
<comment type="function">
    <text evidence="2">One of the essential components for the initiation of protein synthesis. Protects formylmethionyl-tRNA from spontaneous hydrolysis and promotes its binding to the 30S ribosomal subunits. Also involved in the hydrolysis of GTP during the formation of the 70S ribosomal complex.</text>
</comment>
<comment type="subcellular location">
    <subcellularLocation>
        <location evidence="2">Cytoplasm</location>
    </subcellularLocation>
</comment>
<comment type="similarity">
    <text evidence="2">Belongs to the TRAFAC class translation factor GTPase superfamily. Classic translation factor GTPase family. IF-2 subfamily.</text>
</comment>
<gene>
    <name evidence="2" type="primary">infB</name>
    <name type="ordered locus">MSC_0349</name>
</gene>
<evidence type="ECO:0000250" key="1"/>
<evidence type="ECO:0000255" key="2">
    <source>
        <dbReference type="HAMAP-Rule" id="MF_00100"/>
    </source>
</evidence>
<accession>Q6MTQ0</accession>
<dbReference type="EMBL" id="BX293980">
    <property type="protein sequence ID" value="CAE76986.1"/>
    <property type="molecule type" value="Genomic_DNA"/>
</dbReference>
<dbReference type="RefSeq" id="NP_975344.1">
    <property type="nucleotide sequence ID" value="NC_005364.2"/>
</dbReference>
<dbReference type="RefSeq" id="WP_011166542.1">
    <property type="nucleotide sequence ID" value="NC_005364.2"/>
</dbReference>
<dbReference type="SMR" id="Q6MTQ0"/>
<dbReference type="STRING" id="272632.MSC_0349"/>
<dbReference type="KEGG" id="mmy:MSC_0349"/>
<dbReference type="PATRIC" id="fig|272632.4.peg.377"/>
<dbReference type="eggNOG" id="COG0532">
    <property type="taxonomic scope" value="Bacteria"/>
</dbReference>
<dbReference type="HOGENOM" id="CLU_006301_5_1_14"/>
<dbReference type="Proteomes" id="UP000001016">
    <property type="component" value="Chromosome"/>
</dbReference>
<dbReference type="GO" id="GO:0005829">
    <property type="term" value="C:cytosol"/>
    <property type="evidence" value="ECO:0007669"/>
    <property type="project" value="TreeGrafter"/>
</dbReference>
<dbReference type="GO" id="GO:0005525">
    <property type="term" value="F:GTP binding"/>
    <property type="evidence" value="ECO:0007669"/>
    <property type="project" value="UniProtKB-KW"/>
</dbReference>
<dbReference type="GO" id="GO:0003924">
    <property type="term" value="F:GTPase activity"/>
    <property type="evidence" value="ECO:0007669"/>
    <property type="project" value="UniProtKB-UniRule"/>
</dbReference>
<dbReference type="GO" id="GO:0003743">
    <property type="term" value="F:translation initiation factor activity"/>
    <property type="evidence" value="ECO:0007669"/>
    <property type="project" value="UniProtKB-UniRule"/>
</dbReference>
<dbReference type="CDD" id="cd01887">
    <property type="entry name" value="IF2_eIF5B"/>
    <property type="match status" value="1"/>
</dbReference>
<dbReference type="CDD" id="cd03702">
    <property type="entry name" value="IF2_mtIF2_II"/>
    <property type="match status" value="1"/>
</dbReference>
<dbReference type="CDD" id="cd03692">
    <property type="entry name" value="mtIF2_IVc"/>
    <property type="match status" value="1"/>
</dbReference>
<dbReference type="FunFam" id="2.40.30.10:FF:000008">
    <property type="entry name" value="Translation initiation factor IF-2"/>
    <property type="match status" value="1"/>
</dbReference>
<dbReference type="FunFam" id="2.40.30.10:FF:000054">
    <property type="entry name" value="Translation initiation factor IF-2"/>
    <property type="match status" value="1"/>
</dbReference>
<dbReference type="FunFam" id="3.40.50.10050:FF:000001">
    <property type="entry name" value="Translation initiation factor IF-2"/>
    <property type="match status" value="1"/>
</dbReference>
<dbReference type="FunFam" id="3.40.50.300:FF:000019">
    <property type="entry name" value="Translation initiation factor IF-2"/>
    <property type="match status" value="1"/>
</dbReference>
<dbReference type="Gene3D" id="3.40.50.300">
    <property type="entry name" value="P-loop containing nucleotide triphosphate hydrolases"/>
    <property type="match status" value="1"/>
</dbReference>
<dbReference type="Gene3D" id="2.40.30.10">
    <property type="entry name" value="Translation factors"/>
    <property type="match status" value="2"/>
</dbReference>
<dbReference type="Gene3D" id="3.40.50.10050">
    <property type="entry name" value="Translation initiation factor IF- 2, domain 3"/>
    <property type="match status" value="1"/>
</dbReference>
<dbReference type="HAMAP" id="MF_00100_B">
    <property type="entry name" value="IF_2_B"/>
    <property type="match status" value="1"/>
</dbReference>
<dbReference type="InterPro" id="IPR053905">
    <property type="entry name" value="EF-G-like_DII"/>
</dbReference>
<dbReference type="InterPro" id="IPR044145">
    <property type="entry name" value="IF2_II"/>
</dbReference>
<dbReference type="InterPro" id="IPR006847">
    <property type="entry name" value="IF2_N"/>
</dbReference>
<dbReference type="InterPro" id="IPR027417">
    <property type="entry name" value="P-loop_NTPase"/>
</dbReference>
<dbReference type="InterPro" id="IPR005225">
    <property type="entry name" value="Small_GTP-bd"/>
</dbReference>
<dbReference type="InterPro" id="IPR000795">
    <property type="entry name" value="T_Tr_GTP-bd_dom"/>
</dbReference>
<dbReference type="InterPro" id="IPR000178">
    <property type="entry name" value="TF_IF2_bacterial-like"/>
</dbReference>
<dbReference type="InterPro" id="IPR015760">
    <property type="entry name" value="TIF_IF2"/>
</dbReference>
<dbReference type="InterPro" id="IPR023115">
    <property type="entry name" value="TIF_IF2_dom3"/>
</dbReference>
<dbReference type="InterPro" id="IPR036925">
    <property type="entry name" value="TIF_IF2_dom3_sf"/>
</dbReference>
<dbReference type="InterPro" id="IPR009000">
    <property type="entry name" value="Transl_B-barrel_sf"/>
</dbReference>
<dbReference type="NCBIfam" id="TIGR00487">
    <property type="entry name" value="IF-2"/>
    <property type="match status" value="1"/>
</dbReference>
<dbReference type="NCBIfam" id="TIGR00231">
    <property type="entry name" value="small_GTP"/>
    <property type="match status" value="1"/>
</dbReference>
<dbReference type="PANTHER" id="PTHR43381:SF5">
    <property type="entry name" value="TR-TYPE G DOMAIN-CONTAINING PROTEIN"/>
    <property type="match status" value="1"/>
</dbReference>
<dbReference type="PANTHER" id="PTHR43381">
    <property type="entry name" value="TRANSLATION INITIATION FACTOR IF-2-RELATED"/>
    <property type="match status" value="1"/>
</dbReference>
<dbReference type="Pfam" id="PF22042">
    <property type="entry name" value="EF-G_D2"/>
    <property type="match status" value="1"/>
</dbReference>
<dbReference type="Pfam" id="PF00009">
    <property type="entry name" value="GTP_EFTU"/>
    <property type="match status" value="1"/>
</dbReference>
<dbReference type="Pfam" id="PF11987">
    <property type="entry name" value="IF-2"/>
    <property type="match status" value="1"/>
</dbReference>
<dbReference type="Pfam" id="PF04760">
    <property type="entry name" value="IF2_N"/>
    <property type="match status" value="1"/>
</dbReference>
<dbReference type="SUPFAM" id="SSF52156">
    <property type="entry name" value="Initiation factor IF2/eIF5b, domain 3"/>
    <property type="match status" value="1"/>
</dbReference>
<dbReference type="SUPFAM" id="SSF52540">
    <property type="entry name" value="P-loop containing nucleoside triphosphate hydrolases"/>
    <property type="match status" value="1"/>
</dbReference>
<dbReference type="SUPFAM" id="SSF50447">
    <property type="entry name" value="Translation proteins"/>
    <property type="match status" value="2"/>
</dbReference>
<dbReference type="PROSITE" id="PS51722">
    <property type="entry name" value="G_TR_2"/>
    <property type="match status" value="1"/>
</dbReference>